<feature type="chain" id="PRO_1000129230" description="Succinate--CoA ligase [ADP-forming] subunit beta">
    <location>
        <begin position="1"/>
        <end position="388"/>
    </location>
</feature>
<feature type="domain" description="ATP-grasp" evidence="1">
    <location>
        <begin position="9"/>
        <end position="244"/>
    </location>
</feature>
<feature type="binding site" evidence="1">
    <location>
        <position position="46"/>
    </location>
    <ligand>
        <name>ATP</name>
        <dbReference type="ChEBI" id="CHEBI:30616"/>
    </ligand>
</feature>
<feature type="binding site" evidence="1">
    <location>
        <begin position="53"/>
        <end position="55"/>
    </location>
    <ligand>
        <name>ATP</name>
        <dbReference type="ChEBI" id="CHEBI:30616"/>
    </ligand>
</feature>
<feature type="binding site" evidence="1">
    <location>
        <position position="99"/>
    </location>
    <ligand>
        <name>ATP</name>
        <dbReference type="ChEBI" id="CHEBI:30616"/>
    </ligand>
</feature>
<feature type="binding site" evidence="1">
    <location>
        <position position="102"/>
    </location>
    <ligand>
        <name>ATP</name>
        <dbReference type="ChEBI" id="CHEBI:30616"/>
    </ligand>
</feature>
<feature type="binding site" evidence="1">
    <location>
        <position position="107"/>
    </location>
    <ligand>
        <name>ATP</name>
        <dbReference type="ChEBI" id="CHEBI:30616"/>
    </ligand>
</feature>
<feature type="binding site" evidence="1">
    <location>
        <position position="199"/>
    </location>
    <ligand>
        <name>Mg(2+)</name>
        <dbReference type="ChEBI" id="CHEBI:18420"/>
    </ligand>
</feature>
<feature type="binding site" evidence="1">
    <location>
        <position position="213"/>
    </location>
    <ligand>
        <name>Mg(2+)</name>
        <dbReference type="ChEBI" id="CHEBI:18420"/>
    </ligand>
</feature>
<feature type="binding site" evidence="1">
    <location>
        <position position="264"/>
    </location>
    <ligand>
        <name>substrate</name>
        <note>ligand shared with subunit alpha</note>
    </ligand>
</feature>
<feature type="binding site" evidence="1">
    <location>
        <begin position="321"/>
        <end position="323"/>
    </location>
    <ligand>
        <name>substrate</name>
        <note>ligand shared with subunit alpha</note>
    </ligand>
</feature>
<protein>
    <recommendedName>
        <fullName evidence="1">Succinate--CoA ligase [ADP-forming] subunit beta</fullName>
        <ecNumber evidence="1">6.2.1.5</ecNumber>
    </recommendedName>
    <alternativeName>
        <fullName evidence="1">Succinyl-CoA synthetase subunit beta</fullName>
        <shortName evidence="1">SCS-beta</shortName>
    </alternativeName>
</protein>
<reference key="1">
    <citation type="submission" date="2008-05" db="EMBL/GenBank/DDBJ databases">
        <title>Complete sequence of Shigella boydii serotype 18 strain BS512.</title>
        <authorList>
            <person name="Rasko D.A."/>
            <person name="Rosovitz M."/>
            <person name="Maurelli A.T."/>
            <person name="Myers G."/>
            <person name="Seshadri R."/>
            <person name="Cer R."/>
            <person name="Jiang L."/>
            <person name="Ravel J."/>
            <person name="Sebastian Y."/>
        </authorList>
    </citation>
    <scope>NUCLEOTIDE SEQUENCE [LARGE SCALE GENOMIC DNA]</scope>
    <source>
        <strain>CDC 3083-94 / BS512</strain>
    </source>
</reference>
<comment type="function">
    <text evidence="1">Succinyl-CoA synthetase functions in the citric acid cycle (TCA), coupling the hydrolysis of succinyl-CoA to the synthesis of either ATP or GTP and thus represents the only step of substrate-level phosphorylation in the TCA. The beta subunit provides nucleotide specificity of the enzyme and binds the substrate succinate, while the binding sites for coenzyme A and phosphate are found in the alpha subunit.</text>
</comment>
<comment type="catalytic activity">
    <reaction evidence="1">
        <text>succinate + ATP + CoA = succinyl-CoA + ADP + phosphate</text>
        <dbReference type="Rhea" id="RHEA:17661"/>
        <dbReference type="ChEBI" id="CHEBI:30031"/>
        <dbReference type="ChEBI" id="CHEBI:30616"/>
        <dbReference type="ChEBI" id="CHEBI:43474"/>
        <dbReference type="ChEBI" id="CHEBI:57287"/>
        <dbReference type="ChEBI" id="CHEBI:57292"/>
        <dbReference type="ChEBI" id="CHEBI:456216"/>
        <dbReference type="EC" id="6.2.1.5"/>
    </reaction>
    <physiologicalReaction direction="right-to-left" evidence="1">
        <dbReference type="Rhea" id="RHEA:17663"/>
    </physiologicalReaction>
</comment>
<comment type="catalytic activity">
    <reaction evidence="1">
        <text>GTP + succinate + CoA = succinyl-CoA + GDP + phosphate</text>
        <dbReference type="Rhea" id="RHEA:22120"/>
        <dbReference type="ChEBI" id="CHEBI:30031"/>
        <dbReference type="ChEBI" id="CHEBI:37565"/>
        <dbReference type="ChEBI" id="CHEBI:43474"/>
        <dbReference type="ChEBI" id="CHEBI:57287"/>
        <dbReference type="ChEBI" id="CHEBI:57292"/>
        <dbReference type="ChEBI" id="CHEBI:58189"/>
    </reaction>
    <physiologicalReaction direction="right-to-left" evidence="1">
        <dbReference type="Rhea" id="RHEA:22122"/>
    </physiologicalReaction>
</comment>
<comment type="cofactor">
    <cofactor evidence="1">
        <name>Mg(2+)</name>
        <dbReference type="ChEBI" id="CHEBI:18420"/>
    </cofactor>
    <text evidence="1">Binds 1 Mg(2+) ion per subunit.</text>
</comment>
<comment type="pathway">
    <text evidence="1">Carbohydrate metabolism; tricarboxylic acid cycle; succinate from succinyl-CoA (ligase route): step 1/1.</text>
</comment>
<comment type="subunit">
    <text evidence="1">Heterotetramer of two alpha and two beta subunits.</text>
</comment>
<comment type="similarity">
    <text evidence="1">Belongs to the succinate/malate CoA ligase beta subunit family.</text>
</comment>
<sequence>MNLHEYQAKQLFARYGLPAPVGYACTTPREAEEAASKIGAGPWVVKCQVHAGGRGKAGGVKVVNSKEDIRAFAENWLGKRLVTYQTDANGQPVNQILVEAATDIAKELYLGAVVDRSSRRVVFMASTEGGVEIEKVAEETPQLIHKVALDPLTGPMPYQGRELAFKLGLEGKLVQQFTKIFMGLATIFLERDLALIEINPLVITKQGDLICLDGKLGADGNALFRQLDLREMRDQSQEDPREAQAAQWELNYVALDGNIGCMVNGAGLAMGTMDIVKLHGGEPANFLDVGGGATKERVTEAFKIILSDDKVKVVLVNIFGGIVRCDLIADGIIGAVAEVGVNVPVVVRLEGNNAELGAKKLADSGLNIIAAKGLTDAAQQVVAAVEGK</sequence>
<proteinExistence type="inferred from homology"/>
<name>SUCC_SHIB3</name>
<dbReference type="EC" id="6.2.1.5" evidence="1"/>
<dbReference type="EMBL" id="CP001063">
    <property type="protein sequence ID" value="ACD08503.1"/>
    <property type="molecule type" value="Genomic_DNA"/>
</dbReference>
<dbReference type="RefSeq" id="WP_001048611.1">
    <property type="nucleotide sequence ID" value="NC_010658.1"/>
</dbReference>
<dbReference type="SMR" id="B2TUB2"/>
<dbReference type="STRING" id="344609.SbBS512_E0647"/>
<dbReference type="KEGG" id="sbc:SbBS512_E0647"/>
<dbReference type="HOGENOM" id="CLU_037430_0_2_6"/>
<dbReference type="UniPathway" id="UPA00223">
    <property type="reaction ID" value="UER00999"/>
</dbReference>
<dbReference type="Proteomes" id="UP000001030">
    <property type="component" value="Chromosome"/>
</dbReference>
<dbReference type="GO" id="GO:0005829">
    <property type="term" value="C:cytosol"/>
    <property type="evidence" value="ECO:0007669"/>
    <property type="project" value="TreeGrafter"/>
</dbReference>
<dbReference type="GO" id="GO:0042709">
    <property type="term" value="C:succinate-CoA ligase complex"/>
    <property type="evidence" value="ECO:0007669"/>
    <property type="project" value="TreeGrafter"/>
</dbReference>
<dbReference type="GO" id="GO:0005524">
    <property type="term" value="F:ATP binding"/>
    <property type="evidence" value="ECO:0007669"/>
    <property type="project" value="UniProtKB-UniRule"/>
</dbReference>
<dbReference type="GO" id="GO:0000287">
    <property type="term" value="F:magnesium ion binding"/>
    <property type="evidence" value="ECO:0007669"/>
    <property type="project" value="UniProtKB-UniRule"/>
</dbReference>
<dbReference type="GO" id="GO:0004775">
    <property type="term" value="F:succinate-CoA ligase (ADP-forming) activity"/>
    <property type="evidence" value="ECO:0007669"/>
    <property type="project" value="UniProtKB-UniRule"/>
</dbReference>
<dbReference type="GO" id="GO:0004776">
    <property type="term" value="F:succinate-CoA ligase (GDP-forming) activity"/>
    <property type="evidence" value="ECO:0007669"/>
    <property type="project" value="RHEA"/>
</dbReference>
<dbReference type="GO" id="GO:0006104">
    <property type="term" value="P:succinyl-CoA metabolic process"/>
    <property type="evidence" value="ECO:0007669"/>
    <property type="project" value="TreeGrafter"/>
</dbReference>
<dbReference type="GO" id="GO:0006099">
    <property type="term" value="P:tricarboxylic acid cycle"/>
    <property type="evidence" value="ECO:0007669"/>
    <property type="project" value="UniProtKB-UniRule"/>
</dbReference>
<dbReference type="FunFam" id="3.30.1490.20:FF:000002">
    <property type="entry name" value="Succinate--CoA ligase [ADP-forming] subunit beta"/>
    <property type="match status" value="1"/>
</dbReference>
<dbReference type="FunFam" id="3.30.470.20:FF:000002">
    <property type="entry name" value="Succinate--CoA ligase [ADP-forming] subunit beta"/>
    <property type="match status" value="1"/>
</dbReference>
<dbReference type="FunFam" id="3.40.50.261:FF:000001">
    <property type="entry name" value="Succinate--CoA ligase [ADP-forming] subunit beta"/>
    <property type="match status" value="1"/>
</dbReference>
<dbReference type="Gene3D" id="3.30.1490.20">
    <property type="entry name" value="ATP-grasp fold, A domain"/>
    <property type="match status" value="1"/>
</dbReference>
<dbReference type="Gene3D" id="3.30.470.20">
    <property type="entry name" value="ATP-grasp fold, B domain"/>
    <property type="match status" value="1"/>
</dbReference>
<dbReference type="Gene3D" id="3.40.50.261">
    <property type="entry name" value="Succinyl-CoA synthetase domains"/>
    <property type="match status" value="1"/>
</dbReference>
<dbReference type="HAMAP" id="MF_00558">
    <property type="entry name" value="Succ_CoA_beta"/>
    <property type="match status" value="1"/>
</dbReference>
<dbReference type="InterPro" id="IPR011761">
    <property type="entry name" value="ATP-grasp"/>
</dbReference>
<dbReference type="InterPro" id="IPR013650">
    <property type="entry name" value="ATP-grasp_succ-CoA_synth-type"/>
</dbReference>
<dbReference type="InterPro" id="IPR013815">
    <property type="entry name" value="ATP_grasp_subdomain_1"/>
</dbReference>
<dbReference type="InterPro" id="IPR017866">
    <property type="entry name" value="Succ-CoA_synthase_bsu_CS"/>
</dbReference>
<dbReference type="InterPro" id="IPR005811">
    <property type="entry name" value="SUCC_ACL_C"/>
</dbReference>
<dbReference type="InterPro" id="IPR005809">
    <property type="entry name" value="Succ_CoA_ligase-like_bsu"/>
</dbReference>
<dbReference type="InterPro" id="IPR016102">
    <property type="entry name" value="Succinyl-CoA_synth-like"/>
</dbReference>
<dbReference type="NCBIfam" id="NF001913">
    <property type="entry name" value="PRK00696.1"/>
    <property type="match status" value="1"/>
</dbReference>
<dbReference type="NCBIfam" id="TIGR01016">
    <property type="entry name" value="sucCoAbeta"/>
    <property type="match status" value="1"/>
</dbReference>
<dbReference type="PANTHER" id="PTHR11815:SF10">
    <property type="entry name" value="SUCCINATE--COA LIGASE [GDP-FORMING] SUBUNIT BETA, MITOCHONDRIAL"/>
    <property type="match status" value="1"/>
</dbReference>
<dbReference type="PANTHER" id="PTHR11815">
    <property type="entry name" value="SUCCINYL-COA SYNTHETASE BETA CHAIN"/>
    <property type="match status" value="1"/>
</dbReference>
<dbReference type="Pfam" id="PF08442">
    <property type="entry name" value="ATP-grasp_2"/>
    <property type="match status" value="1"/>
</dbReference>
<dbReference type="Pfam" id="PF00549">
    <property type="entry name" value="Ligase_CoA"/>
    <property type="match status" value="1"/>
</dbReference>
<dbReference type="PIRSF" id="PIRSF001554">
    <property type="entry name" value="SucCS_beta"/>
    <property type="match status" value="1"/>
</dbReference>
<dbReference type="SUPFAM" id="SSF56059">
    <property type="entry name" value="Glutathione synthetase ATP-binding domain-like"/>
    <property type="match status" value="1"/>
</dbReference>
<dbReference type="SUPFAM" id="SSF52210">
    <property type="entry name" value="Succinyl-CoA synthetase domains"/>
    <property type="match status" value="1"/>
</dbReference>
<dbReference type="PROSITE" id="PS50975">
    <property type="entry name" value="ATP_GRASP"/>
    <property type="match status" value="1"/>
</dbReference>
<dbReference type="PROSITE" id="PS01217">
    <property type="entry name" value="SUCCINYL_COA_LIG_3"/>
    <property type="match status" value="1"/>
</dbReference>
<accession>B2TUB2</accession>
<organism>
    <name type="scientific">Shigella boydii serotype 18 (strain CDC 3083-94 / BS512)</name>
    <dbReference type="NCBI Taxonomy" id="344609"/>
    <lineage>
        <taxon>Bacteria</taxon>
        <taxon>Pseudomonadati</taxon>
        <taxon>Pseudomonadota</taxon>
        <taxon>Gammaproteobacteria</taxon>
        <taxon>Enterobacterales</taxon>
        <taxon>Enterobacteriaceae</taxon>
        <taxon>Shigella</taxon>
    </lineage>
</organism>
<keyword id="KW-0067">ATP-binding</keyword>
<keyword id="KW-0436">Ligase</keyword>
<keyword id="KW-0460">Magnesium</keyword>
<keyword id="KW-0479">Metal-binding</keyword>
<keyword id="KW-0547">Nucleotide-binding</keyword>
<keyword id="KW-1185">Reference proteome</keyword>
<keyword id="KW-0816">Tricarboxylic acid cycle</keyword>
<evidence type="ECO:0000255" key="1">
    <source>
        <dbReference type="HAMAP-Rule" id="MF_00558"/>
    </source>
</evidence>
<gene>
    <name evidence="1" type="primary">sucC</name>
    <name type="ordered locus">SbBS512_E0647</name>
</gene>